<gene>
    <name type="primary">ninF</name>
</gene>
<dbReference type="EMBL" id="J02459">
    <property type="protein sequence ID" value="AAA96591.1"/>
    <property type="molecule type" value="Genomic_DNA"/>
</dbReference>
<dbReference type="PIR" id="D43011">
    <property type="entry name" value="QXBP8L"/>
</dbReference>
<dbReference type="RefSeq" id="NP_040638.1">
    <property type="nucleotide sequence ID" value="NC_001416.1"/>
</dbReference>
<dbReference type="IntAct" id="P03769">
    <property type="interactions" value="3"/>
</dbReference>
<dbReference type="GeneID" id="2703501"/>
<dbReference type="KEGG" id="vg:2703501"/>
<dbReference type="Proteomes" id="UP000001711">
    <property type="component" value="Genome"/>
</dbReference>
<dbReference type="InterPro" id="IPR008712">
    <property type="entry name" value="NinF"/>
</dbReference>
<dbReference type="Pfam" id="PF05810">
    <property type="entry name" value="NinF"/>
    <property type="match status" value="1"/>
</dbReference>
<name>NINF_LAMBD</name>
<organism>
    <name type="scientific">Escherichia phage lambda</name>
    <name type="common">Bacteriophage lambda</name>
    <dbReference type="NCBI Taxonomy" id="2681611"/>
    <lineage>
        <taxon>Viruses</taxon>
        <taxon>Duplodnaviria</taxon>
        <taxon>Heunggongvirae</taxon>
        <taxon>Uroviricota</taxon>
        <taxon>Caudoviricetes</taxon>
        <taxon>Lambdavirus</taxon>
        <taxon>Lambdavirus lambda</taxon>
    </lineage>
</organism>
<accession>P03769</accession>
<sequence>MIDQNRSYEQESVERALTCANCGQKLHVLEVHVCEHCCAELMSDPNSSMHEEEDDG</sequence>
<organismHost>
    <name type="scientific">Escherichia coli</name>
    <dbReference type="NCBI Taxonomy" id="562"/>
</organismHost>
<protein>
    <recommendedName>
        <fullName>Protein ninF</fullName>
    </recommendedName>
</protein>
<reference key="1">
    <citation type="journal article" date="1982" name="J. Mol. Biol.">
        <title>Nucleotide sequence of bacteriophage lambda DNA.</title>
        <authorList>
            <person name="Sanger F."/>
            <person name="Coulson A.R."/>
            <person name="Hong G.F."/>
            <person name="Hill D.F."/>
            <person name="Petersen G.B."/>
        </authorList>
    </citation>
    <scope>NUCLEOTIDE SEQUENCE [LARGE SCALE GENOMIC DNA]</scope>
</reference>
<keyword id="KW-1185">Reference proteome</keyword>
<evidence type="ECO:0000305" key="1"/>
<feature type="chain" id="PRO_0000077622" description="Protein ninF">
    <location>
        <begin position="1"/>
        <end position="56"/>
    </location>
</feature>
<proteinExistence type="inferred from homology"/>
<comment type="similarity">
    <text evidence="1">Belongs to the ninF family.</text>
</comment>